<sequence>MAVALQFSRLCVRPDTFVRENHLSGSGSLRRRKALSVRCSSGDENAPSPSVVMDSDFDAKVFRKNLTRSDNYNRKGFGHKEETLKLMNREYTSDILETLKTNGYTYSWGDVTVKLAKAYGFCWGVERAVQIAYEARKQFPEERLWITNEIIHNPTVNKRLEDMDVKIIPVEDSKKQFDVVEKDDVVILPAFGAGVDEMYVLNDKKVQIVDTTCPWVTKVWNTVEKHKKGEYTSVIHGKYNHEETIATASFAGKYIIVKNMKEANYVCDYILGGQYDGSSSTKEEFMEKFKYAISKGFDPDNDLVKVGIANQTTMLKGETEEIGRLLETTMMRKYGVENVSGHFISFNTICDATQERQDAIYELVEEKIDLMLVVGGWNSSNTSHLQEISEARGIPSYWIDSEKRIGPGNKIAYKLHYGELVEKENFLPKGPITIGVTSGASTPDKVVEDALVKVFDIKREELLQLA</sequence>
<name>ISPH_ARATH</name>
<proteinExistence type="evidence at protein level"/>
<feature type="transit peptide" description="Chloroplast" evidence="2">
    <location>
        <begin position="1"/>
        <end position="38"/>
    </location>
</feature>
<feature type="chain" id="PRO_0000417592" description="4-hydroxy-3-methylbut-2-enyl diphosphate reductase, chloroplastic">
    <location>
        <begin position="39"/>
        <end position="466"/>
    </location>
</feature>
<feature type="active site" description="Proton donor" evidence="1">
    <location>
        <position position="243"/>
    </location>
</feature>
<feature type="binding site" evidence="1">
    <location>
        <position position="122"/>
    </location>
    <ligand>
        <name>[4Fe-4S] cluster</name>
        <dbReference type="ChEBI" id="CHEBI:49883"/>
    </ligand>
</feature>
<feature type="binding site" evidence="1">
    <location>
        <position position="152"/>
    </location>
    <ligand>
        <name>(2E)-4-hydroxy-3-methylbut-2-enyl diphosphate</name>
        <dbReference type="ChEBI" id="CHEBI:128753"/>
    </ligand>
</feature>
<feature type="binding site" evidence="1">
    <location>
        <position position="213"/>
    </location>
    <ligand>
        <name>[4Fe-4S] cluster</name>
        <dbReference type="ChEBI" id="CHEBI:49883"/>
    </ligand>
</feature>
<feature type="binding site" evidence="1">
    <location>
        <position position="241"/>
    </location>
    <ligand>
        <name>(2E)-4-hydroxy-3-methylbut-2-enyl diphosphate</name>
        <dbReference type="ChEBI" id="CHEBI:128753"/>
    </ligand>
</feature>
<feature type="binding site" evidence="1">
    <location>
        <position position="312"/>
    </location>
    <ligand>
        <name>(2E)-4-hydroxy-3-methylbut-2-enyl diphosphate</name>
        <dbReference type="ChEBI" id="CHEBI:128753"/>
    </ligand>
</feature>
<feature type="binding site" evidence="1">
    <location>
        <position position="350"/>
    </location>
    <ligand>
        <name>[4Fe-4S] cluster</name>
        <dbReference type="ChEBI" id="CHEBI:49883"/>
    </ligand>
</feature>
<feature type="binding site" evidence="1">
    <location>
        <begin position="379"/>
        <end position="381"/>
    </location>
    <ligand>
        <name>(2E)-4-hydroxy-3-methylbut-2-enyl diphosphate</name>
        <dbReference type="ChEBI" id="CHEBI:128753"/>
    </ligand>
</feature>
<feature type="binding site" evidence="1">
    <location>
        <position position="441"/>
    </location>
    <ligand>
        <name>(2E)-4-hydroxy-3-methylbut-2-enyl diphosphate</name>
        <dbReference type="ChEBI" id="CHEBI:128753"/>
    </ligand>
</feature>
<reference key="1">
    <citation type="journal article" date="2005" name="Plant Cell">
        <title>Characterization of the Arabidopsis clb6 mutant illustrates the importance of posttranscriptional regulation of the methyl-D-erythritol 4-phosphate pathway.</title>
        <authorList>
            <person name="Guevara-Garcia A."/>
            <person name="San Roman C."/>
            <person name="Arroyo A."/>
            <person name="Cortes M.E."/>
            <person name="de la Luz Gutierrez-Nava M."/>
            <person name="Leon P."/>
        </authorList>
    </citation>
    <scope>NUCLEOTIDE SEQUENCE [GENOMIC DNA]</scope>
    <scope>FUNCTION</scope>
    <scope>DISRUPTION PHENOTYPE</scope>
    <source>
        <strain>cv. Landsberg erecta</strain>
    </source>
</reference>
<reference key="2">
    <citation type="journal article" date="2005" name="Plant Physiol.">
        <title>The Arabidopsis IspH homolog is involved in the plastid nonmevalonate pathway of isoprenoid biosynthesis.</title>
        <authorList>
            <person name="Hsieh M.H."/>
            <person name="Goodman H.M."/>
        </authorList>
    </citation>
    <scope>NUCLEOTIDE SEQUENCE [MRNA]</scope>
    <scope>FUNCTION</scope>
    <scope>CATALYTIC ACTIVITY</scope>
    <scope>TISSUE SPECIFICITY</scope>
    <scope>INDUCTION</scope>
    <scope>DISRUPTION PHENOTYPE</scope>
</reference>
<reference key="3">
    <citation type="journal article" date="1999" name="Nature">
        <title>Sequence and analysis of chromosome 4 of the plant Arabidopsis thaliana.</title>
        <authorList>
            <person name="Mayer K.F.X."/>
            <person name="Schueller C."/>
            <person name="Wambutt R."/>
            <person name="Murphy G."/>
            <person name="Volckaert G."/>
            <person name="Pohl T."/>
            <person name="Duesterhoeft A."/>
            <person name="Stiekema W."/>
            <person name="Entian K.-D."/>
            <person name="Terryn N."/>
            <person name="Harris B."/>
            <person name="Ansorge W."/>
            <person name="Brandt P."/>
            <person name="Grivell L.A."/>
            <person name="Rieger M."/>
            <person name="Weichselgartner M."/>
            <person name="de Simone V."/>
            <person name="Obermaier B."/>
            <person name="Mache R."/>
            <person name="Mueller M."/>
            <person name="Kreis M."/>
            <person name="Delseny M."/>
            <person name="Puigdomenech P."/>
            <person name="Watson M."/>
            <person name="Schmidtheini T."/>
            <person name="Reichert B."/>
            <person name="Portetelle D."/>
            <person name="Perez-Alonso M."/>
            <person name="Boutry M."/>
            <person name="Bancroft I."/>
            <person name="Vos P."/>
            <person name="Hoheisel J."/>
            <person name="Zimmermann W."/>
            <person name="Wedler H."/>
            <person name="Ridley P."/>
            <person name="Langham S.-A."/>
            <person name="McCullagh B."/>
            <person name="Bilham L."/>
            <person name="Robben J."/>
            <person name="van der Schueren J."/>
            <person name="Grymonprez B."/>
            <person name="Chuang Y.-J."/>
            <person name="Vandenbussche F."/>
            <person name="Braeken M."/>
            <person name="Weltjens I."/>
            <person name="Voet M."/>
            <person name="Bastiaens I."/>
            <person name="Aert R."/>
            <person name="Defoor E."/>
            <person name="Weitzenegger T."/>
            <person name="Bothe G."/>
            <person name="Ramsperger U."/>
            <person name="Hilbert H."/>
            <person name="Braun M."/>
            <person name="Holzer E."/>
            <person name="Brandt A."/>
            <person name="Peters S."/>
            <person name="van Staveren M."/>
            <person name="Dirkse W."/>
            <person name="Mooijman P."/>
            <person name="Klein Lankhorst R."/>
            <person name="Rose M."/>
            <person name="Hauf J."/>
            <person name="Koetter P."/>
            <person name="Berneiser S."/>
            <person name="Hempel S."/>
            <person name="Feldpausch M."/>
            <person name="Lamberth S."/>
            <person name="Van den Daele H."/>
            <person name="De Keyser A."/>
            <person name="Buysshaert C."/>
            <person name="Gielen J."/>
            <person name="Villarroel R."/>
            <person name="De Clercq R."/>
            <person name="van Montagu M."/>
            <person name="Rogers J."/>
            <person name="Cronin A."/>
            <person name="Quail M.A."/>
            <person name="Bray-Allen S."/>
            <person name="Clark L."/>
            <person name="Doggett J."/>
            <person name="Hall S."/>
            <person name="Kay M."/>
            <person name="Lennard N."/>
            <person name="McLay K."/>
            <person name="Mayes R."/>
            <person name="Pettett A."/>
            <person name="Rajandream M.A."/>
            <person name="Lyne M."/>
            <person name="Benes V."/>
            <person name="Rechmann S."/>
            <person name="Borkova D."/>
            <person name="Bloecker H."/>
            <person name="Scharfe M."/>
            <person name="Grimm M."/>
            <person name="Loehnert T.-H."/>
            <person name="Dose S."/>
            <person name="de Haan M."/>
            <person name="Maarse A.C."/>
            <person name="Schaefer M."/>
            <person name="Mueller-Auer S."/>
            <person name="Gabel C."/>
            <person name="Fuchs M."/>
            <person name="Fartmann B."/>
            <person name="Granderath K."/>
            <person name="Dauner D."/>
            <person name="Herzl A."/>
            <person name="Neumann S."/>
            <person name="Argiriou A."/>
            <person name="Vitale D."/>
            <person name="Liguori R."/>
            <person name="Piravandi E."/>
            <person name="Massenet O."/>
            <person name="Quigley F."/>
            <person name="Clabauld G."/>
            <person name="Muendlein A."/>
            <person name="Felber R."/>
            <person name="Schnabl S."/>
            <person name="Hiller R."/>
            <person name="Schmidt W."/>
            <person name="Lecharny A."/>
            <person name="Aubourg S."/>
            <person name="Chefdor F."/>
            <person name="Cooke R."/>
            <person name="Berger C."/>
            <person name="Monfort A."/>
            <person name="Casacuberta E."/>
            <person name="Gibbons T."/>
            <person name="Weber N."/>
            <person name="Vandenbol M."/>
            <person name="Bargues M."/>
            <person name="Terol J."/>
            <person name="Torres A."/>
            <person name="Perez-Perez A."/>
            <person name="Purnelle B."/>
            <person name="Bent E."/>
            <person name="Johnson S."/>
            <person name="Tacon D."/>
            <person name="Jesse T."/>
            <person name="Heijnen L."/>
            <person name="Schwarz S."/>
            <person name="Scholler P."/>
            <person name="Heber S."/>
            <person name="Francs P."/>
            <person name="Bielke C."/>
            <person name="Frishman D."/>
            <person name="Haase D."/>
            <person name="Lemcke K."/>
            <person name="Mewes H.-W."/>
            <person name="Stocker S."/>
            <person name="Zaccaria P."/>
            <person name="Bevan M."/>
            <person name="Wilson R.K."/>
            <person name="de la Bastide M."/>
            <person name="Habermann K."/>
            <person name="Parnell L."/>
            <person name="Dedhia N."/>
            <person name="Gnoj L."/>
            <person name="Schutz K."/>
            <person name="Huang E."/>
            <person name="Spiegel L."/>
            <person name="Sekhon M."/>
            <person name="Murray J."/>
            <person name="Sheet P."/>
            <person name="Cordes M."/>
            <person name="Abu-Threideh J."/>
            <person name="Stoneking T."/>
            <person name="Kalicki J."/>
            <person name="Graves T."/>
            <person name="Harmon G."/>
            <person name="Edwards J."/>
            <person name="Latreille P."/>
            <person name="Courtney L."/>
            <person name="Cloud J."/>
            <person name="Abbott A."/>
            <person name="Scott K."/>
            <person name="Johnson D."/>
            <person name="Minx P."/>
            <person name="Bentley D."/>
            <person name="Fulton B."/>
            <person name="Miller N."/>
            <person name="Greco T."/>
            <person name="Kemp K."/>
            <person name="Kramer J."/>
            <person name="Fulton L."/>
            <person name="Mardis E."/>
            <person name="Dante M."/>
            <person name="Pepin K."/>
            <person name="Hillier L.W."/>
            <person name="Nelson J."/>
            <person name="Spieth J."/>
            <person name="Ryan E."/>
            <person name="Andrews S."/>
            <person name="Geisel C."/>
            <person name="Layman D."/>
            <person name="Du H."/>
            <person name="Ali J."/>
            <person name="Berghoff A."/>
            <person name="Jones K."/>
            <person name="Drone K."/>
            <person name="Cotton M."/>
            <person name="Joshu C."/>
            <person name="Antonoiu B."/>
            <person name="Zidanic M."/>
            <person name="Strong C."/>
            <person name="Sun H."/>
            <person name="Lamar B."/>
            <person name="Yordan C."/>
            <person name="Ma P."/>
            <person name="Zhong J."/>
            <person name="Preston R."/>
            <person name="Vil D."/>
            <person name="Shekher M."/>
            <person name="Matero A."/>
            <person name="Shah R."/>
            <person name="Swaby I.K."/>
            <person name="O'Shaughnessy A."/>
            <person name="Rodriguez M."/>
            <person name="Hoffman J."/>
            <person name="Till S."/>
            <person name="Granat S."/>
            <person name="Shohdy N."/>
            <person name="Hasegawa A."/>
            <person name="Hameed A."/>
            <person name="Lodhi M."/>
            <person name="Johnson A."/>
            <person name="Chen E."/>
            <person name="Marra M.A."/>
            <person name="Martienssen R."/>
            <person name="McCombie W.R."/>
        </authorList>
    </citation>
    <scope>NUCLEOTIDE SEQUENCE [LARGE SCALE GENOMIC DNA]</scope>
    <source>
        <strain>cv. Columbia</strain>
    </source>
</reference>
<reference key="4">
    <citation type="journal article" date="2017" name="Plant J.">
        <title>Araport11: a complete reannotation of the Arabidopsis thaliana reference genome.</title>
        <authorList>
            <person name="Cheng C.Y."/>
            <person name="Krishnakumar V."/>
            <person name="Chan A.P."/>
            <person name="Thibaud-Nissen F."/>
            <person name="Schobel S."/>
            <person name="Town C.D."/>
        </authorList>
    </citation>
    <scope>GENOME REANNOTATION</scope>
    <source>
        <strain>cv. Columbia</strain>
    </source>
</reference>
<reference key="5">
    <citation type="journal article" date="2003" name="Science">
        <title>Empirical analysis of transcriptional activity in the Arabidopsis genome.</title>
        <authorList>
            <person name="Yamada K."/>
            <person name="Lim J."/>
            <person name="Dale J.M."/>
            <person name="Chen H."/>
            <person name="Shinn P."/>
            <person name="Palm C.J."/>
            <person name="Southwick A.M."/>
            <person name="Wu H.C."/>
            <person name="Kim C.J."/>
            <person name="Nguyen M."/>
            <person name="Pham P.K."/>
            <person name="Cheuk R.F."/>
            <person name="Karlin-Newmann G."/>
            <person name="Liu S.X."/>
            <person name="Lam B."/>
            <person name="Sakano H."/>
            <person name="Wu T."/>
            <person name="Yu G."/>
            <person name="Miranda M."/>
            <person name="Quach H.L."/>
            <person name="Tripp M."/>
            <person name="Chang C.H."/>
            <person name="Lee J.M."/>
            <person name="Toriumi M.J."/>
            <person name="Chan M.M."/>
            <person name="Tang C.C."/>
            <person name="Onodera C.S."/>
            <person name="Deng J.M."/>
            <person name="Akiyama K."/>
            <person name="Ansari Y."/>
            <person name="Arakawa T."/>
            <person name="Banh J."/>
            <person name="Banno F."/>
            <person name="Bowser L."/>
            <person name="Brooks S.Y."/>
            <person name="Carninci P."/>
            <person name="Chao Q."/>
            <person name="Choy N."/>
            <person name="Enju A."/>
            <person name="Goldsmith A.D."/>
            <person name="Gurjal M."/>
            <person name="Hansen N.F."/>
            <person name="Hayashizaki Y."/>
            <person name="Johnson-Hopson C."/>
            <person name="Hsuan V.W."/>
            <person name="Iida K."/>
            <person name="Karnes M."/>
            <person name="Khan S."/>
            <person name="Koesema E."/>
            <person name="Ishida J."/>
            <person name="Jiang P.X."/>
            <person name="Jones T."/>
            <person name="Kawai J."/>
            <person name="Kamiya A."/>
            <person name="Meyers C."/>
            <person name="Nakajima M."/>
            <person name="Narusaka M."/>
            <person name="Seki M."/>
            <person name="Sakurai T."/>
            <person name="Satou M."/>
            <person name="Tamse R."/>
            <person name="Vaysberg M."/>
            <person name="Wallender E.K."/>
            <person name="Wong C."/>
            <person name="Yamamura Y."/>
            <person name="Yuan S."/>
            <person name="Shinozaki K."/>
            <person name="Davis R.W."/>
            <person name="Theologis A."/>
            <person name="Ecker J.R."/>
        </authorList>
    </citation>
    <scope>NUCLEOTIDE SEQUENCE [LARGE SCALE MRNA]</scope>
    <source>
        <strain>cv. Columbia</strain>
    </source>
</reference>
<reference key="6">
    <citation type="journal article" date="2009" name="DNA Res.">
        <title>Analysis of multiple occurrences of alternative splicing events in Arabidopsis thaliana using novel sequenced full-length cDNAs.</title>
        <authorList>
            <person name="Iida K."/>
            <person name="Fukami-Kobayashi K."/>
            <person name="Toyoda A."/>
            <person name="Sakaki Y."/>
            <person name="Kobayashi M."/>
            <person name="Seki M."/>
            <person name="Shinozaki K."/>
        </authorList>
    </citation>
    <scope>NUCLEOTIDE SEQUENCE [LARGE SCALE MRNA] OF 109-466</scope>
    <source>
        <strain>cv. Columbia</strain>
        <tissue>Rosette leaf</tissue>
    </source>
</reference>
<reference key="7">
    <citation type="submission" date="2005-03" db="EMBL/GenBank/DDBJ databases">
        <title>Large-scale analysis of RIKEN Arabidopsis full-length (RAFL) cDNAs.</title>
        <authorList>
            <person name="Totoki Y."/>
            <person name="Seki M."/>
            <person name="Ishida J."/>
            <person name="Nakajima M."/>
            <person name="Enju A."/>
            <person name="Kamiya A."/>
            <person name="Narusaka M."/>
            <person name="Shin-i T."/>
            <person name="Nakagawa M."/>
            <person name="Sakamoto N."/>
            <person name="Oishi K."/>
            <person name="Kohara Y."/>
            <person name="Kobayashi M."/>
            <person name="Toyoda A."/>
            <person name="Sakaki Y."/>
            <person name="Sakurai T."/>
            <person name="Iida K."/>
            <person name="Akiyama K."/>
            <person name="Satou M."/>
            <person name="Toyoda T."/>
            <person name="Konagaya A."/>
            <person name="Carninci P."/>
            <person name="Kawai J."/>
            <person name="Hayashizaki Y."/>
            <person name="Shinozaki K."/>
        </authorList>
    </citation>
    <scope>NUCLEOTIDE SEQUENCE [LARGE SCALE MRNA] OF 247-466</scope>
    <source>
        <strain>cv. Columbia</strain>
    </source>
</reference>
<reference key="8">
    <citation type="journal article" date="2008" name="Plant Mol. Biol.">
        <title>Chloroplast localization of methylerythritol 4-phosphate pathway enzymes and regulation of mitochondrial genes in ispD and ispE albino mutants in Arabidopsis.</title>
        <authorList>
            <person name="Hsieh M.H."/>
            <person name="Chang C.Y."/>
            <person name="Hsu S.J."/>
            <person name="Chen J.J."/>
        </authorList>
    </citation>
    <scope>SUBCELLULAR LOCATION</scope>
</reference>
<organism>
    <name type="scientific">Arabidopsis thaliana</name>
    <name type="common">Mouse-ear cress</name>
    <dbReference type="NCBI Taxonomy" id="3702"/>
    <lineage>
        <taxon>Eukaryota</taxon>
        <taxon>Viridiplantae</taxon>
        <taxon>Streptophyta</taxon>
        <taxon>Embryophyta</taxon>
        <taxon>Tracheophyta</taxon>
        <taxon>Spermatophyta</taxon>
        <taxon>Magnoliopsida</taxon>
        <taxon>eudicotyledons</taxon>
        <taxon>Gunneridae</taxon>
        <taxon>Pentapetalae</taxon>
        <taxon>rosids</taxon>
        <taxon>malvids</taxon>
        <taxon>Brassicales</taxon>
        <taxon>Brassicaceae</taxon>
        <taxon>Camelineae</taxon>
        <taxon>Arabidopsis</taxon>
    </lineage>
</organism>
<keyword id="KW-0004">4Fe-4S</keyword>
<keyword id="KW-0150">Chloroplast</keyword>
<keyword id="KW-0408">Iron</keyword>
<keyword id="KW-0411">Iron-sulfur</keyword>
<keyword id="KW-0414">Isoprene biosynthesis</keyword>
<keyword id="KW-0479">Metal-binding</keyword>
<keyword id="KW-0560">Oxidoreductase</keyword>
<keyword id="KW-0934">Plastid</keyword>
<keyword id="KW-1185">Reference proteome</keyword>
<keyword id="KW-0809">Transit peptide</keyword>
<accession>Q94B35</accession>
<accession>B9DHZ9</accession>
<accession>Q56WI5</accession>
<accession>Q5EGH0</accession>
<accession>Q9SZ00</accession>
<protein>
    <recommendedName>
        <fullName evidence="8">4-hydroxy-3-methylbut-2-enyl diphosphate reductase, chloroplastic</fullName>
        <ecNumber evidence="9">1.17.7.4</ecNumber>
    </recommendedName>
    <alternativeName>
        <fullName evidence="6">Protein CHLOROPLAST BIOGENESIS 6</fullName>
    </alternativeName>
</protein>
<comment type="function">
    <text evidence="3 4">Enzyme of the plastid non-mevalonate pathway for isoprenoid biosynthesis that converts 1-hydroxy-2-methyl-2-(E)-butenyl 4-diphosphate into isopentenyl diphosphate (IPP) and dimethylallyl diphosphate (DMAPP). Is essential for chloroplast development.</text>
</comment>
<comment type="catalytic activity">
    <reaction evidence="9">
        <text>isopentenyl diphosphate + 2 oxidized [2Fe-2S]-[ferredoxin] + H2O = (2E)-4-hydroxy-3-methylbut-2-enyl diphosphate + 2 reduced [2Fe-2S]-[ferredoxin] + 2 H(+)</text>
        <dbReference type="Rhea" id="RHEA:24488"/>
        <dbReference type="Rhea" id="RHEA-COMP:10000"/>
        <dbReference type="Rhea" id="RHEA-COMP:10001"/>
        <dbReference type="ChEBI" id="CHEBI:15377"/>
        <dbReference type="ChEBI" id="CHEBI:15378"/>
        <dbReference type="ChEBI" id="CHEBI:33737"/>
        <dbReference type="ChEBI" id="CHEBI:33738"/>
        <dbReference type="ChEBI" id="CHEBI:128753"/>
        <dbReference type="ChEBI" id="CHEBI:128769"/>
        <dbReference type="EC" id="1.17.7.4"/>
    </reaction>
</comment>
<comment type="catalytic activity">
    <reaction evidence="9">
        <text>dimethylallyl diphosphate + 2 oxidized [2Fe-2S]-[ferredoxin] + H2O = (2E)-4-hydroxy-3-methylbut-2-enyl diphosphate + 2 reduced [2Fe-2S]-[ferredoxin] + 2 H(+)</text>
        <dbReference type="Rhea" id="RHEA:24825"/>
        <dbReference type="Rhea" id="RHEA-COMP:10000"/>
        <dbReference type="Rhea" id="RHEA-COMP:10001"/>
        <dbReference type="ChEBI" id="CHEBI:15377"/>
        <dbReference type="ChEBI" id="CHEBI:15378"/>
        <dbReference type="ChEBI" id="CHEBI:33737"/>
        <dbReference type="ChEBI" id="CHEBI:33738"/>
        <dbReference type="ChEBI" id="CHEBI:57623"/>
        <dbReference type="ChEBI" id="CHEBI:128753"/>
        <dbReference type="EC" id="1.17.7.4"/>
    </reaction>
</comment>
<comment type="cofactor">
    <cofactor evidence="1">
        <name>[4Fe-4S] cluster</name>
        <dbReference type="ChEBI" id="CHEBI:49883"/>
    </cofactor>
    <text evidence="1">Binds 1 [4Fe-4S] cluster per subunit.</text>
</comment>
<comment type="pathway">
    <text evidence="9">Isoprenoid biosynthesis; dimethylallyl diphosphate biosynthesis; dimethylallyl diphosphate from (2E)-4-hydroxy-3-methylbutenyl diphosphate: step 1/1.</text>
</comment>
<comment type="pathway">
    <text evidence="9">Isoprenoid biosynthesis; isopentenyl diphosphate biosynthesis via DXP pathway; isopentenyl diphosphate from 1-deoxy-D-xylulose 5-phosphate: step 6/6.</text>
</comment>
<comment type="subunit">
    <text evidence="1">Homodimer.</text>
</comment>
<comment type="subcellular location">
    <subcellularLocation>
        <location evidence="5">Plastid</location>
        <location evidence="5">Chloroplast stroma</location>
    </subcellularLocation>
</comment>
<comment type="tissue specificity">
    <text evidence="4">Expressed in roots, stems, leaves, flowers and siliques.</text>
</comment>
<comment type="induction">
    <text evidence="4">Circadian-regulated with a peak in the late period of dark phase and early period of the light phase.</text>
</comment>
<comment type="disruption phenotype">
    <text evidence="3 4">Albino phenotype and seedling lethal when homozygous. The phenotype is caused by an early arrest in chloroplast differentiation.</text>
</comment>
<comment type="similarity">
    <text evidence="8">Belongs to the IspH family.</text>
</comment>
<comment type="sequence caution" evidence="8">
    <conflict type="erroneous gene model prediction">
        <sequence resource="EMBL-CDS" id="AAW82381"/>
    </conflict>
</comment>
<comment type="sequence caution" evidence="8">
    <conflict type="erroneous initiation">
        <sequence resource="EMBL-CDS" id="BAD94833"/>
    </conflict>
    <text>Truncated N-terminus.</text>
</comment>
<comment type="sequence caution" evidence="8">
    <conflict type="erroneous gene model prediction">
        <sequence resource="EMBL-CDS" id="CAB36712"/>
    </conflict>
</comment>
<comment type="sequence caution" evidence="8">
    <conflict type="erroneous gene model prediction">
        <sequence resource="EMBL-CDS" id="CAB80152"/>
    </conflict>
</comment>
<dbReference type="EC" id="1.17.7.4" evidence="9"/>
<dbReference type="EMBL" id="AY883838">
    <property type="protein sequence ID" value="AAW82381.1"/>
    <property type="status" value="ALT_SEQ"/>
    <property type="molecule type" value="Genomic_DNA"/>
</dbReference>
<dbReference type="EMBL" id="AY168881">
    <property type="protein sequence ID" value="AAN87171.1"/>
    <property type="molecule type" value="mRNA"/>
</dbReference>
<dbReference type="EMBL" id="AL035521">
    <property type="protein sequence ID" value="CAB36712.1"/>
    <property type="status" value="ALT_SEQ"/>
    <property type="molecule type" value="Genomic_DNA"/>
</dbReference>
<dbReference type="EMBL" id="AL161585">
    <property type="protein sequence ID" value="CAB80152.1"/>
    <property type="status" value="ALT_SEQ"/>
    <property type="molecule type" value="Genomic_DNA"/>
</dbReference>
<dbReference type="EMBL" id="CP002687">
    <property type="protein sequence ID" value="AEE86362.1"/>
    <property type="molecule type" value="Genomic_DNA"/>
</dbReference>
<dbReference type="EMBL" id="AY042877">
    <property type="protein sequence ID" value="AAK68817.1"/>
    <property type="molecule type" value="mRNA"/>
</dbReference>
<dbReference type="EMBL" id="AY081454">
    <property type="protein sequence ID" value="AAM10016.1"/>
    <property type="molecule type" value="mRNA"/>
</dbReference>
<dbReference type="EMBL" id="AK317707">
    <property type="protein sequence ID" value="BAH20366.1"/>
    <property type="molecule type" value="mRNA"/>
</dbReference>
<dbReference type="EMBL" id="AK222055">
    <property type="protein sequence ID" value="BAD94833.1"/>
    <property type="status" value="ALT_INIT"/>
    <property type="molecule type" value="mRNA"/>
</dbReference>
<dbReference type="PIR" id="T04781">
    <property type="entry name" value="T04781"/>
</dbReference>
<dbReference type="RefSeq" id="NP_567965.1">
    <property type="nucleotide sequence ID" value="NM_119600.4"/>
</dbReference>
<dbReference type="SMR" id="Q94B35"/>
<dbReference type="FunCoup" id="Q94B35">
    <property type="interactions" value="255"/>
</dbReference>
<dbReference type="STRING" id="3702.Q94B35"/>
<dbReference type="MetOSite" id="Q94B35"/>
<dbReference type="PaxDb" id="3702-AT4G34350.1"/>
<dbReference type="ProteomicsDB" id="232230"/>
<dbReference type="EnsemblPlants" id="AT4G34350.1">
    <property type="protein sequence ID" value="AT4G34350.1"/>
    <property type="gene ID" value="AT4G34350"/>
</dbReference>
<dbReference type="GeneID" id="829585"/>
<dbReference type="Gramene" id="AT4G34350.1">
    <property type="protein sequence ID" value="AT4G34350.1"/>
    <property type="gene ID" value="AT4G34350"/>
</dbReference>
<dbReference type="KEGG" id="ath:AT4G34350"/>
<dbReference type="Araport" id="AT4G34350"/>
<dbReference type="TAIR" id="AT4G34350">
    <property type="gene designation" value="HDR"/>
</dbReference>
<dbReference type="eggNOG" id="ENOG502QPIQ">
    <property type="taxonomic scope" value="Eukaryota"/>
</dbReference>
<dbReference type="HOGENOM" id="CLU_027486_4_1_1"/>
<dbReference type="InParanoid" id="Q94B35"/>
<dbReference type="OMA" id="MAVAFQF"/>
<dbReference type="OrthoDB" id="1698201at2759"/>
<dbReference type="PhylomeDB" id="Q94B35"/>
<dbReference type="BioCyc" id="ARA:AT4G34350-MONOMER-9581"/>
<dbReference type="BioCyc" id="MetaCyc:AT4G34350-MONOMER-9581"/>
<dbReference type="BRENDA" id="1.17.7.4">
    <property type="organism ID" value="399"/>
</dbReference>
<dbReference type="UniPathway" id="UPA00056">
    <property type="reaction ID" value="UER00097"/>
</dbReference>
<dbReference type="UniPathway" id="UPA00059">
    <property type="reaction ID" value="UER00105"/>
</dbReference>
<dbReference type="PRO" id="PR:Q94B35"/>
<dbReference type="Proteomes" id="UP000006548">
    <property type="component" value="Chromosome 4"/>
</dbReference>
<dbReference type="ExpressionAtlas" id="Q94B35">
    <property type="expression patterns" value="baseline and differential"/>
</dbReference>
<dbReference type="GO" id="GO:0009507">
    <property type="term" value="C:chloroplast"/>
    <property type="evidence" value="ECO:0007005"/>
    <property type="project" value="TAIR"/>
</dbReference>
<dbReference type="GO" id="GO:0009570">
    <property type="term" value="C:chloroplast stroma"/>
    <property type="evidence" value="ECO:0000314"/>
    <property type="project" value="TAIR"/>
</dbReference>
<dbReference type="GO" id="GO:0005886">
    <property type="term" value="C:plasma membrane"/>
    <property type="evidence" value="ECO:0007005"/>
    <property type="project" value="TAIR"/>
</dbReference>
<dbReference type="GO" id="GO:0051539">
    <property type="term" value="F:4 iron, 4 sulfur cluster binding"/>
    <property type="evidence" value="ECO:0007669"/>
    <property type="project" value="UniProtKB-KW"/>
</dbReference>
<dbReference type="GO" id="GO:0046429">
    <property type="term" value="F:4-hydroxy-3-methylbut-2-en-1-yl diphosphate synthase activity (ferredoxin)"/>
    <property type="evidence" value="ECO:0000315"/>
    <property type="project" value="TAIR"/>
</dbReference>
<dbReference type="GO" id="GO:0051745">
    <property type="term" value="F:4-hydroxy-3-methylbut-2-enyl diphosphate reductase activity"/>
    <property type="evidence" value="ECO:0007669"/>
    <property type="project" value="UniProtKB-EC"/>
</dbReference>
<dbReference type="GO" id="GO:0046872">
    <property type="term" value="F:metal ion binding"/>
    <property type="evidence" value="ECO:0007669"/>
    <property type="project" value="UniProtKB-KW"/>
</dbReference>
<dbReference type="GO" id="GO:0050992">
    <property type="term" value="P:dimethylallyl diphosphate biosynthetic process"/>
    <property type="evidence" value="ECO:0007669"/>
    <property type="project" value="UniProtKB-UniPathway"/>
</dbReference>
<dbReference type="GO" id="GO:0019288">
    <property type="term" value="P:isopentenyl diphosphate biosynthetic process, methylerythritol 4-phosphate pathway"/>
    <property type="evidence" value="ECO:0000270"/>
    <property type="project" value="TAIR"/>
</dbReference>
<dbReference type="CDD" id="cd13944">
    <property type="entry name" value="lytB_ispH"/>
    <property type="match status" value="1"/>
</dbReference>
<dbReference type="Gene3D" id="3.40.50.11270">
    <property type="match status" value="1"/>
</dbReference>
<dbReference type="Gene3D" id="3.40.1010.20">
    <property type="entry name" value="4-hydroxy-3-methylbut-2-enyl diphosphate reductase, catalytic domain"/>
    <property type="match status" value="2"/>
</dbReference>
<dbReference type="HAMAP" id="MF_00191">
    <property type="entry name" value="IspH"/>
    <property type="match status" value="1"/>
</dbReference>
<dbReference type="InterPro" id="IPR003451">
    <property type="entry name" value="LytB/IspH"/>
</dbReference>
<dbReference type="NCBIfam" id="TIGR00216">
    <property type="entry name" value="ispH_lytB"/>
    <property type="match status" value="1"/>
</dbReference>
<dbReference type="NCBIfam" id="NF009911">
    <property type="entry name" value="PRK13371.1"/>
    <property type="match status" value="1"/>
</dbReference>
<dbReference type="PANTHER" id="PTHR31619">
    <property type="entry name" value="4-HYDROXY-3-METHYLBUT-2-ENYL DIPHOSPHATE REDUCTASE, CHLOROPLASTIC"/>
    <property type="match status" value="1"/>
</dbReference>
<dbReference type="PANTHER" id="PTHR31619:SF5">
    <property type="entry name" value="4-HYDROXY-3-METHYLBUT-2-ENYL DIPHOSPHATE REDUCTASE, CHLOROPLASTIC"/>
    <property type="match status" value="1"/>
</dbReference>
<dbReference type="Pfam" id="PF02401">
    <property type="entry name" value="LYTB"/>
    <property type="match status" value="1"/>
</dbReference>
<evidence type="ECO:0000250" key="1">
    <source>
        <dbReference type="UniProtKB" id="P62623"/>
    </source>
</evidence>
<evidence type="ECO:0000255" key="2"/>
<evidence type="ECO:0000269" key="3">
    <source>
    </source>
</evidence>
<evidence type="ECO:0000269" key="4">
    <source>
    </source>
</evidence>
<evidence type="ECO:0000269" key="5">
    <source>
    </source>
</evidence>
<evidence type="ECO:0000303" key="6">
    <source>
    </source>
</evidence>
<evidence type="ECO:0000303" key="7">
    <source>
    </source>
</evidence>
<evidence type="ECO:0000305" key="8"/>
<evidence type="ECO:0000305" key="9">
    <source>
    </source>
</evidence>
<evidence type="ECO:0000312" key="10">
    <source>
        <dbReference type="Araport" id="AT4G34350"/>
    </source>
</evidence>
<evidence type="ECO:0000312" key="11">
    <source>
        <dbReference type="EMBL" id="CAB36712.1"/>
    </source>
</evidence>
<gene>
    <name evidence="7" type="primary">ISPH</name>
    <name evidence="6" type="synonym">CLB6</name>
    <name evidence="8" type="synonym">HDR</name>
    <name evidence="10" type="ordered locus">At4g34350</name>
    <name evidence="11" type="ORF">F10M10.120</name>
</gene>